<evidence type="ECO:0000255" key="1">
    <source>
        <dbReference type="HAMAP-Rule" id="MF_00815"/>
    </source>
</evidence>
<reference key="1">
    <citation type="journal article" date="1999" name="Mol. Biol. Evol.">
        <title>Sequence evolution in bacterial endosymbionts having extreme base compositions.</title>
        <authorList>
            <person name="Clark M.A."/>
            <person name="Moran N.A."/>
            <person name="Baumann P."/>
        </authorList>
    </citation>
    <scope>NUCLEOTIDE SEQUENCE [GENOMIC DNA]</scope>
</reference>
<organism>
    <name type="scientific">Buchnera aphidicola subsp. Schlechtendalia chinensis</name>
    <dbReference type="NCBI Taxonomy" id="118110"/>
    <lineage>
        <taxon>Bacteria</taxon>
        <taxon>Pseudomonadati</taxon>
        <taxon>Pseudomonadota</taxon>
        <taxon>Gammaproteobacteria</taxon>
        <taxon>Enterobacterales</taxon>
        <taxon>Erwiniaceae</taxon>
        <taxon>Buchnera</taxon>
    </lineage>
</organism>
<accession>Q9RQ77</accession>
<gene>
    <name evidence="1" type="primary">atpG</name>
</gene>
<proteinExistence type="inferred from homology"/>
<protein>
    <recommendedName>
        <fullName evidence="1">ATP synthase gamma chain</fullName>
    </recommendedName>
    <alternativeName>
        <fullName evidence="1">ATP synthase F1 sector gamma subunit</fullName>
    </alternativeName>
    <alternativeName>
        <fullName evidence="1">F-ATPase gamma subunit</fullName>
    </alternativeName>
</protein>
<comment type="function">
    <text evidence="1">Produces ATP from ADP in the presence of a proton gradient across the membrane. The gamma chain is believed to be important in regulating ATPase activity and the flow of protons through the CF(0) complex.</text>
</comment>
<comment type="subunit">
    <text evidence="1">F-type ATPases have 2 components, CF(1) - the catalytic core - and CF(0) - the membrane proton channel. CF(1) has five subunits: alpha(3), beta(3), gamma(1), delta(1), epsilon(1). CF(0) has three main subunits: a, b and c.</text>
</comment>
<comment type="subcellular location">
    <subcellularLocation>
        <location evidence="1">Cell membrane</location>
        <topology evidence="1">Peripheral membrane protein</topology>
    </subcellularLocation>
</comment>
<comment type="similarity">
    <text evidence="1">Belongs to the ATPase gamma chain family.</text>
</comment>
<dbReference type="EMBL" id="AF129403">
    <property type="protein sequence ID" value="AAF13781.1"/>
    <property type="molecule type" value="Genomic_DNA"/>
</dbReference>
<dbReference type="SMR" id="Q9RQ77"/>
<dbReference type="STRING" id="118110.XW81_00040"/>
<dbReference type="GO" id="GO:0005886">
    <property type="term" value="C:plasma membrane"/>
    <property type="evidence" value="ECO:0007669"/>
    <property type="project" value="UniProtKB-SubCell"/>
</dbReference>
<dbReference type="GO" id="GO:0045259">
    <property type="term" value="C:proton-transporting ATP synthase complex"/>
    <property type="evidence" value="ECO:0007669"/>
    <property type="project" value="UniProtKB-KW"/>
</dbReference>
<dbReference type="GO" id="GO:0005524">
    <property type="term" value="F:ATP binding"/>
    <property type="evidence" value="ECO:0007669"/>
    <property type="project" value="UniProtKB-UniRule"/>
</dbReference>
<dbReference type="GO" id="GO:0046933">
    <property type="term" value="F:proton-transporting ATP synthase activity, rotational mechanism"/>
    <property type="evidence" value="ECO:0007669"/>
    <property type="project" value="UniProtKB-UniRule"/>
</dbReference>
<dbReference type="GO" id="GO:0042777">
    <property type="term" value="P:proton motive force-driven plasma membrane ATP synthesis"/>
    <property type="evidence" value="ECO:0007669"/>
    <property type="project" value="UniProtKB-UniRule"/>
</dbReference>
<dbReference type="CDD" id="cd12151">
    <property type="entry name" value="F1-ATPase_gamma"/>
    <property type="match status" value="1"/>
</dbReference>
<dbReference type="FunFam" id="1.10.287.80:FF:000005">
    <property type="entry name" value="ATP synthase gamma chain"/>
    <property type="match status" value="1"/>
</dbReference>
<dbReference type="Gene3D" id="3.40.1380.10">
    <property type="match status" value="1"/>
</dbReference>
<dbReference type="Gene3D" id="1.10.287.80">
    <property type="entry name" value="ATP synthase, gamma subunit, helix hairpin domain"/>
    <property type="match status" value="2"/>
</dbReference>
<dbReference type="HAMAP" id="MF_00815">
    <property type="entry name" value="ATP_synth_gamma_bact"/>
    <property type="match status" value="1"/>
</dbReference>
<dbReference type="InterPro" id="IPR035968">
    <property type="entry name" value="ATP_synth_F1_ATPase_gsu"/>
</dbReference>
<dbReference type="InterPro" id="IPR000131">
    <property type="entry name" value="ATP_synth_F1_gsu"/>
</dbReference>
<dbReference type="InterPro" id="IPR023632">
    <property type="entry name" value="ATP_synth_F1_gsu_CS"/>
</dbReference>
<dbReference type="NCBIfam" id="TIGR01146">
    <property type="entry name" value="ATPsyn_F1gamma"/>
    <property type="match status" value="1"/>
</dbReference>
<dbReference type="PANTHER" id="PTHR11693">
    <property type="entry name" value="ATP SYNTHASE GAMMA CHAIN"/>
    <property type="match status" value="1"/>
</dbReference>
<dbReference type="PANTHER" id="PTHR11693:SF22">
    <property type="entry name" value="ATP SYNTHASE SUBUNIT GAMMA, MITOCHONDRIAL"/>
    <property type="match status" value="1"/>
</dbReference>
<dbReference type="Pfam" id="PF00231">
    <property type="entry name" value="ATP-synt"/>
    <property type="match status" value="1"/>
</dbReference>
<dbReference type="PRINTS" id="PR00126">
    <property type="entry name" value="ATPASEGAMMA"/>
</dbReference>
<dbReference type="SUPFAM" id="SSF52943">
    <property type="entry name" value="ATP synthase (F1-ATPase), gamma subunit"/>
    <property type="match status" value="1"/>
</dbReference>
<dbReference type="PROSITE" id="PS00153">
    <property type="entry name" value="ATPASE_GAMMA"/>
    <property type="match status" value="1"/>
</dbReference>
<sequence length="290" mass="33865">MSEKKEIKNKINCISNTKKITKAMEMVSIAKMKKSEIKMKSRKPYLDIIKTIISHILYNHIKYRHLYLNNRKTKKIGIIVISTDRGLCGSLNISLFKKIIQLINIYKNKNVMSSLFILGSKGVSYFKSSTYDITYYEKIITKNYTFFDCLNFIHSSLEYYNTQKIDKLFLSYNQFKNTLVYIPVIMQLLPLSKKIFKGNKNSHWDYIYESNSGILLDTLLNDYIESQIYQSILENCTCEQASRMISMKQATDNSEDLIKKLRILYNKARQDNITQELTEIISGANAVSLY</sequence>
<name>ATPG_BUCSC</name>
<keyword id="KW-0066">ATP synthesis</keyword>
<keyword id="KW-1003">Cell membrane</keyword>
<keyword id="KW-0139">CF(1)</keyword>
<keyword id="KW-0375">Hydrogen ion transport</keyword>
<keyword id="KW-0406">Ion transport</keyword>
<keyword id="KW-0472">Membrane</keyword>
<keyword id="KW-0813">Transport</keyword>
<feature type="chain" id="PRO_0000073257" description="ATP synthase gamma chain">
    <location>
        <begin position="1"/>
        <end position="290"/>
    </location>
</feature>